<organism>
    <name type="scientific">Mycobacterium bovis (strain ATCC BAA-935 / AF2122/97)</name>
    <dbReference type="NCBI Taxonomy" id="233413"/>
    <lineage>
        <taxon>Bacteria</taxon>
        <taxon>Bacillati</taxon>
        <taxon>Actinomycetota</taxon>
        <taxon>Actinomycetes</taxon>
        <taxon>Mycobacteriales</taxon>
        <taxon>Mycobacteriaceae</taxon>
        <taxon>Mycobacterium</taxon>
        <taxon>Mycobacterium tuberculosis complex</taxon>
    </lineage>
</organism>
<evidence type="ECO:0000255" key="1">
    <source>
        <dbReference type="HAMAP-Rule" id="MF_00963"/>
    </source>
</evidence>
<evidence type="ECO:0000256" key="2">
    <source>
        <dbReference type="SAM" id="MobiDB-lite"/>
    </source>
</evidence>
<name>SIGA_MYCBO</name>
<proteinExistence type="inferred from homology"/>
<reference key="1">
    <citation type="submission" date="1995-11" db="EMBL/GenBank/DDBJ databases">
        <title>Mutation of the principal sigma factor causes loss of virulence in a strain of the Mycobacterium tuberculosis complex.</title>
        <authorList>
            <person name="Collins D.M."/>
            <person name="Kawakami R.P."/>
            <person name="de Lisle G.W."/>
            <person name="Pascopella L."/>
            <person name="Bloom B.R."/>
            <person name="Jacobs W.R. Jr."/>
        </authorList>
    </citation>
    <scope>NUCLEOTIDE SEQUENCE [GENOMIC DNA]</scope>
    <source>
        <strain>BCG / Pasteur</strain>
    </source>
</reference>
<reference key="2">
    <citation type="journal article" date="2003" name="Proc. Natl. Acad. Sci. U.S.A.">
        <title>The complete genome sequence of Mycobacterium bovis.</title>
        <authorList>
            <person name="Garnier T."/>
            <person name="Eiglmeier K."/>
            <person name="Camus J.-C."/>
            <person name="Medina N."/>
            <person name="Mansoor H."/>
            <person name="Pryor M."/>
            <person name="Duthoy S."/>
            <person name="Grondin S."/>
            <person name="Lacroix C."/>
            <person name="Monsempe C."/>
            <person name="Simon S."/>
            <person name="Harris B."/>
            <person name="Atkin R."/>
            <person name="Doggett J."/>
            <person name="Mayes R."/>
            <person name="Keating L."/>
            <person name="Wheeler P.R."/>
            <person name="Parkhill J."/>
            <person name="Barrell B.G."/>
            <person name="Cole S.T."/>
            <person name="Gordon S.V."/>
            <person name="Hewinson R.G."/>
        </authorList>
    </citation>
    <scope>NUCLEOTIDE SEQUENCE [LARGE SCALE GENOMIC DNA]</scope>
    <source>
        <strain>ATCC BAA-935 / AF2122/97</strain>
    </source>
</reference>
<reference key="3">
    <citation type="journal article" date="2017" name="Genome Announc.">
        <title>Updated reference genome sequence and annotation of Mycobacterium bovis AF2122/97.</title>
        <authorList>
            <person name="Malone K.M."/>
            <person name="Farrell D."/>
            <person name="Stuber T.P."/>
            <person name="Schubert O.T."/>
            <person name="Aebersold R."/>
            <person name="Robbe-Austerman S."/>
            <person name="Gordon S.V."/>
        </authorList>
    </citation>
    <scope>NUCLEOTIDE SEQUENCE [LARGE SCALE GENOMIC DNA]</scope>
    <scope>GENOME REANNOTATION</scope>
    <source>
        <strain>ATCC BAA-935 / AF2122/97</strain>
    </source>
</reference>
<protein>
    <recommendedName>
        <fullName evidence="1">RNA polymerase sigma factor SigA</fullName>
    </recommendedName>
    <alternativeName>
        <fullName>Sigma-A</fullName>
    </alternativeName>
</protein>
<keyword id="KW-0963">Cytoplasm</keyword>
<keyword id="KW-0238">DNA-binding</keyword>
<keyword id="KW-1185">Reference proteome</keyword>
<keyword id="KW-0731">Sigma factor</keyword>
<keyword id="KW-0804">Transcription</keyword>
<keyword id="KW-0805">Transcription regulation</keyword>
<dbReference type="EMBL" id="U21133">
    <property type="protein sequence ID" value="AAA81643.1"/>
    <property type="molecule type" value="Genomic_DNA"/>
</dbReference>
<dbReference type="EMBL" id="LT708304">
    <property type="protein sequence ID" value="SIU01340.1"/>
    <property type="molecule type" value="Genomic_DNA"/>
</dbReference>
<dbReference type="RefSeq" id="NP_856368.1">
    <property type="nucleotide sequence ID" value="NC_002945.3"/>
</dbReference>
<dbReference type="RefSeq" id="WP_003413944.1">
    <property type="nucleotide sequence ID" value="NC_002945.4"/>
</dbReference>
<dbReference type="SMR" id="P0A603"/>
<dbReference type="KEGG" id="mbo:BQ2027_MB2722"/>
<dbReference type="PATRIC" id="fig|233413.5.peg.2984"/>
<dbReference type="Proteomes" id="UP000001419">
    <property type="component" value="Chromosome"/>
</dbReference>
<dbReference type="GO" id="GO:0005737">
    <property type="term" value="C:cytoplasm"/>
    <property type="evidence" value="ECO:0007669"/>
    <property type="project" value="UniProtKB-SubCell"/>
</dbReference>
<dbReference type="GO" id="GO:0003677">
    <property type="term" value="F:DNA binding"/>
    <property type="evidence" value="ECO:0007669"/>
    <property type="project" value="UniProtKB-UniRule"/>
</dbReference>
<dbReference type="GO" id="GO:0016987">
    <property type="term" value="F:sigma factor activity"/>
    <property type="evidence" value="ECO:0007669"/>
    <property type="project" value="UniProtKB-UniRule"/>
</dbReference>
<dbReference type="GO" id="GO:0006352">
    <property type="term" value="P:DNA-templated transcription initiation"/>
    <property type="evidence" value="ECO:0007669"/>
    <property type="project" value="UniProtKB-UniRule"/>
</dbReference>
<dbReference type="CDD" id="cd06171">
    <property type="entry name" value="Sigma70_r4"/>
    <property type="match status" value="1"/>
</dbReference>
<dbReference type="FunFam" id="1.10.10.10:FF:000002">
    <property type="entry name" value="RNA polymerase sigma factor SigA"/>
    <property type="match status" value="1"/>
</dbReference>
<dbReference type="FunFam" id="1.10.10.10:FF:000004">
    <property type="entry name" value="RNA polymerase sigma factor SigA"/>
    <property type="match status" value="1"/>
</dbReference>
<dbReference type="FunFam" id="1.10.601.10:FF:000001">
    <property type="entry name" value="RNA polymerase sigma factor SigA"/>
    <property type="match status" value="1"/>
</dbReference>
<dbReference type="FunFam" id="1.10.601.10:FF:000003">
    <property type="entry name" value="RNA polymerase sigma factor SigA"/>
    <property type="match status" value="1"/>
</dbReference>
<dbReference type="Gene3D" id="1.10.601.10">
    <property type="entry name" value="RNA Polymerase Primary Sigma Factor"/>
    <property type="match status" value="2"/>
</dbReference>
<dbReference type="Gene3D" id="1.10.10.10">
    <property type="entry name" value="Winged helix-like DNA-binding domain superfamily/Winged helix DNA-binding domain"/>
    <property type="match status" value="2"/>
</dbReference>
<dbReference type="HAMAP" id="MF_00963">
    <property type="entry name" value="Sigma70_RpoD_SigA"/>
    <property type="match status" value="1"/>
</dbReference>
<dbReference type="InterPro" id="IPR014284">
    <property type="entry name" value="RNA_pol_sigma-70_dom"/>
</dbReference>
<dbReference type="InterPro" id="IPR000943">
    <property type="entry name" value="RNA_pol_sigma70"/>
</dbReference>
<dbReference type="InterPro" id="IPR009042">
    <property type="entry name" value="RNA_pol_sigma70_r1_2"/>
</dbReference>
<dbReference type="InterPro" id="IPR007627">
    <property type="entry name" value="RNA_pol_sigma70_r2"/>
</dbReference>
<dbReference type="InterPro" id="IPR007624">
    <property type="entry name" value="RNA_pol_sigma70_r3"/>
</dbReference>
<dbReference type="InterPro" id="IPR007630">
    <property type="entry name" value="RNA_pol_sigma70_r4"/>
</dbReference>
<dbReference type="InterPro" id="IPR013325">
    <property type="entry name" value="RNA_pol_sigma_r2"/>
</dbReference>
<dbReference type="InterPro" id="IPR013324">
    <property type="entry name" value="RNA_pol_sigma_r3/r4-like"/>
</dbReference>
<dbReference type="InterPro" id="IPR012760">
    <property type="entry name" value="RNA_pol_sigma_RpoD_C"/>
</dbReference>
<dbReference type="InterPro" id="IPR050239">
    <property type="entry name" value="Sigma-70_RNA_pol_init_factors"/>
</dbReference>
<dbReference type="InterPro" id="IPR028630">
    <property type="entry name" value="Sigma70_RpoD"/>
</dbReference>
<dbReference type="InterPro" id="IPR036388">
    <property type="entry name" value="WH-like_DNA-bd_sf"/>
</dbReference>
<dbReference type="NCBIfam" id="NF004560">
    <property type="entry name" value="PRK05901.1-1"/>
    <property type="match status" value="1"/>
</dbReference>
<dbReference type="NCBIfam" id="NF004561">
    <property type="entry name" value="PRK05901.1-3"/>
    <property type="match status" value="1"/>
</dbReference>
<dbReference type="NCBIfam" id="NF005920">
    <property type="entry name" value="PRK07921.1"/>
    <property type="match status" value="1"/>
</dbReference>
<dbReference type="NCBIfam" id="TIGR02393">
    <property type="entry name" value="RpoD_Cterm"/>
    <property type="match status" value="1"/>
</dbReference>
<dbReference type="NCBIfam" id="TIGR02937">
    <property type="entry name" value="sigma70-ECF"/>
    <property type="match status" value="1"/>
</dbReference>
<dbReference type="PANTHER" id="PTHR30603:SF59">
    <property type="entry name" value="RNA POLYMERASE PRINCIPAL SIGMA FACTOR HRDA"/>
    <property type="match status" value="1"/>
</dbReference>
<dbReference type="PANTHER" id="PTHR30603">
    <property type="entry name" value="RNA POLYMERASE SIGMA FACTOR RPO"/>
    <property type="match status" value="1"/>
</dbReference>
<dbReference type="Pfam" id="PF00140">
    <property type="entry name" value="Sigma70_r1_2"/>
    <property type="match status" value="1"/>
</dbReference>
<dbReference type="Pfam" id="PF04542">
    <property type="entry name" value="Sigma70_r2"/>
    <property type="match status" value="1"/>
</dbReference>
<dbReference type="Pfam" id="PF04539">
    <property type="entry name" value="Sigma70_r3"/>
    <property type="match status" value="1"/>
</dbReference>
<dbReference type="Pfam" id="PF04545">
    <property type="entry name" value="Sigma70_r4"/>
    <property type="match status" value="1"/>
</dbReference>
<dbReference type="PRINTS" id="PR00046">
    <property type="entry name" value="SIGMA70FCT"/>
</dbReference>
<dbReference type="SUPFAM" id="SSF88946">
    <property type="entry name" value="Sigma2 domain of RNA polymerase sigma factors"/>
    <property type="match status" value="1"/>
</dbReference>
<dbReference type="SUPFAM" id="SSF88659">
    <property type="entry name" value="Sigma3 and sigma4 domains of RNA polymerase sigma factors"/>
    <property type="match status" value="2"/>
</dbReference>
<dbReference type="PROSITE" id="PS00715">
    <property type="entry name" value="SIGMA70_1"/>
    <property type="match status" value="1"/>
</dbReference>
<dbReference type="PROSITE" id="PS00716">
    <property type="entry name" value="SIGMA70_2"/>
    <property type="match status" value="1"/>
</dbReference>
<comment type="function">
    <text evidence="1">Sigma factors are initiation factors that promote the attachment of RNA polymerase to specific initiation sites and are then released. This sigma factor is the primary sigma factor during exponential growth.</text>
</comment>
<comment type="subunit">
    <text evidence="1">Interacts transiently with the RNA polymerase catalytic core.</text>
</comment>
<comment type="subcellular location">
    <subcellularLocation>
        <location evidence="1">Cytoplasm</location>
    </subcellularLocation>
</comment>
<comment type="similarity">
    <text evidence="1">Belongs to the sigma-70 factor family. RpoD/SigA subfamily.</text>
</comment>
<gene>
    <name evidence="1" type="primary">sigA</name>
    <name type="synonym">mysA</name>
    <name type="synonym">rpoD</name>
    <name type="synonym">rpoV</name>
    <name type="ordered locus">BQ2027_MB2722</name>
</gene>
<accession>P0A603</accession>
<accession>A0A1R3Y1X9</accession>
<accession>O08495</accession>
<accession>O08513</accession>
<accession>Q60162</accession>
<accession>X2BM11</accession>
<sequence>MAATKASTATDEPVKRTATKSPAASASGAKTGAKRTAAKSASGSPPAKRATKPAARSVKPASAPQDTTTSTIPKRKTRAAAKSAAAKAPSARGHATKPRAPKDAQHEAATDPEDALDSVEELDAEPDLDVEPGEDLDLDAADLNLDDLEDDVAPDADDDLDSGDDEDHEDLEAEAAVAPGQTADDDEEIAEPTEKDKASGDFVWDEDESEALRQARKDAELTASADSVRAYLKQIGKVALLNAEEEVELAKRIEAGLYATQLMTELSERGEKLPAAQRRDMMWICRDGDRAKNHLLEANLRLVVSLAKRYTGRGMAFLDLIQEGNLGLIRAVEKFDYTKGYKFSTYATWWIRQAITRAMADQARTIRIPVHMVEVINKLGRIQRELLQDLGREPTPEELAKEMDITPEKVLEIQQYAREPISLDQTIGDEGDSQLGDFIEDSEAVVAVDAVSFTLLQDQLQSVLDTLSEREAGVVRLRFGLTDGQPRTLDEIGQVYGVTRERIRQIESKTMSKLRHPSRSQVLRDYLD</sequence>
<feature type="chain" id="PRO_0000093902" description="RNA polymerase sigma factor SigA">
    <location>
        <begin position="1"/>
        <end position="528"/>
    </location>
</feature>
<feature type="DNA-binding region" description="H-T-H motif" evidence="1">
    <location>
        <begin position="489"/>
        <end position="508"/>
    </location>
</feature>
<feature type="region of interest" description="Disordered" evidence="2">
    <location>
        <begin position="1"/>
        <end position="211"/>
    </location>
</feature>
<feature type="region of interest" description="Sigma-70 factor domain-2" evidence="1">
    <location>
        <begin position="295"/>
        <end position="365"/>
    </location>
</feature>
<feature type="region of interest" description="Sigma-70 factor domain-3" evidence="1">
    <location>
        <begin position="374"/>
        <end position="450"/>
    </location>
</feature>
<feature type="region of interest" description="Sigma-70 factor domain-4" evidence="1">
    <location>
        <begin position="463"/>
        <end position="516"/>
    </location>
</feature>
<feature type="short sequence motif" description="Interaction with polymerase core subunit RpoC">
    <location>
        <begin position="319"/>
        <end position="322"/>
    </location>
</feature>
<feature type="compositionally biased region" description="Polar residues" evidence="2">
    <location>
        <begin position="1"/>
        <end position="10"/>
    </location>
</feature>
<feature type="compositionally biased region" description="Low complexity" evidence="2">
    <location>
        <begin position="19"/>
        <end position="31"/>
    </location>
</feature>
<feature type="compositionally biased region" description="Low complexity" evidence="2">
    <location>
        <begin position="38"/>
        <end position="56"/>
    </location>
</feature>
<feature type="compositionally biased region" description="Low complexity" evidence="2">
    <location>
        <begin position="80"/>
        <end position="92"/>
    </location>
</feature>
<feature type="compositionally biased region" description="Basic and acidic residues" evidence="2">
    <location>
        <begin position="100"/>
        <end position="109"/>
    </location>
</feature>
<feature type="compositionally biased region" description="Acidic residues" evidence="2">
    <location>
        <begin position="110"/>
        <end position="173"/>
    </location>
</feature>